<sequence length="111" mass="11953">MADPQLITTAFDIPGYRIERSLGVARGIVVRSRSIVGTFGASIQTLFGGNISLYTSLCERARQDAYERMIDEARRMGGNAIVGMRYDATEIASGVTEVLCYGTAVQAVRAG</sequence>
<evidence type="ECO:0000255" key="1">
    <source>
        <dbReference type="HAMAP-Rule" id="MF_00338"/>
    </source>
</evidence>
<accession>A3MJ45</accession>
<proteinExistence type="inferred from homology"/>
<gene>
    <name type="ordered locus">BMA10247_0715</name>
</gene>
<feature type="chain" id="PRO_1000012979" description="UPF0145 protein BMA10247_0715">
    <location>
        <begin position="1"/>
        <end position="111"/>
    </location>
</feature>
<dbReference type="EMBL" id="CP000548">
    <property type="protein sequence ID" value="ABO04306.1"/>
    <property type="molecule type" value="Genomic_DNA"/>
</dbReference>
<dbReference type="RefSeq" id="WP_004193399.1">
    <property type="nucleotide sequence ID" value="NZ_CP007802.1"/>
</dbReference>
<dbReference type="SMR" id="A3MJ45"/>
<dbReference type="KEGG" id="bmaz:BM44_2345"/>
<dbReference type="KEGG" id="bmn:BMA10247_0715"/>
<dbReference type="PATRIC" id="fig|320389.8.peg.2629"/>
<dbReference type="Gene3D" id="3.30.110.70">
    <property type="entry name" value="Hypothetical protein apc22750. Chain B"/>
    <property type="match status" value="1"/>
</dbReference>
<dbReference type="HAMAP" id="MF_00338">
    <property type="entry name" value="UPF0145"/>
    <property type="match status" value="1"/>
</dbReference>
<dbReference type="InterPro" id="IPR035439">
    <property type="entry name" value="UPF0145_dom_sf"/>
</dbReference>
<dbReference type="InterPro" id="IPR002765">
    <property type="entry name" value="UPF0145_YbjQ-like"/>
</dbReference>
<dbReference type="PANTHER" id="PTHR34068:SF2">
    <property type="entry name" value="UPF0145 PROTEIN SCO3412"/>
    <property type="match status" value="1"/>
</dbReference>
<dbReference type="PANTHER" id="PTHR34068">
    <property type="entry name" value="UPF0145 PROTEIN YBJQ"/>
    <property type="match status" value="1"/>
</dbReference>
<dbReference type="Pfam" id="PF01906">
    <property type="entry name" value="YbjQ_1"/>
    <property type="match status" value="1"/>
</dbReference>
<dbReference type="SUPFAM" id="SSF117782">
    <property type="entry name" value="YbjQ-like"/>
    <property type="match status" value="1"/>
</dbReference>
<organism>
    <name type="scientific">Burkholderia mallei (strain NCTC 10247)</name>
    <dbReference type="NCBI Taxonomy" id="320389"/>
    <lineage>
        <taxon>Bacteria</taxon>
        <taxon>Pseudomonadati</taxon>
        <taxon>Pseudomonadota</taxon>
        <taxon>Betaproteobacteria</taxon>
        <taxon>Burkholderiales</taxon>
        <taxon>Burkholderiaceae</taxon>
        <taxon>Burkholderia</taxon>
        <taxon>pseudomallei group</taxon>
    </lineage>
</organism>
<name>Y3215_BURM7</name>
<reference key="1">
    <citation type="journal article" date="2010" name="Genome Biol. Evol.">
        <title>Continuing evolution of Burkholderia mallei through genome reduction and large-scale rearrangements.</title>
        <authorList>
            <person name="Losada L."/>
            <person name="Ronning C.M."/>
            <person name="DeShazer D."/>
            <person name="Woods D."/>
            <person name="Fedorova N."/>
            <person name="Kim H.S."/>
            <person name="Shabalina S.A."/>
            <person name="Pearson T.R."/>
            <person name="Brinkac L."/>
            <person name="Tan P."/>
            <person name="Nandi T."/>
            <person name="Crabtree J."/>
            <person name="Badger J."/>
            <person name="Beckstrom-Sternberg S."/>
            <person name="Saqib M."/>
            <person name="Schutzer S.E."/>
            <person name="Keim P."/>
            <person name="Nierman W.C."/>
        </authorList>
    </citation>
    <scope>NUCLEOTIDE SEQUENCE [LARGE SCALE GENOMIC DNA]</scope>
    <source>
        <strain>NCTC 10247</strain>
    </source>
</reference>
<comment type="similarity">
    <text evidence="1">Belongs to the UPF0145 family.</text>
</comment>
<protein>
    <recommendedName>
        <fullName evidence="1">UPF0145 protein BMA10247_0715</fullName>
    </recommendedName>
</protein>